<protein>
    <recommendedName>
        <fullName evidence="1">Large ribosomal subunit protein bL27</fullName>
    </recommendedName>
    <alternativeName>
        <fullName evidence="3">50S ribosomal protein L27</fullName>
    </alternativeName>
</protein>
<organism>
    <name type="scientific">Escherichia coli O6:K15:H31 (strain 536 / UPEC)</name>
    <dbReference type="NCBI Taxonomy" id="362663"/>
    <lineage>
        <taxon>Bacteria</taxon>
        <taxon>Pseudomonadati</taxon>
        <taxon>Pseudomonadota</taxon>
        <taxon>Gammaproteobacteria</taxon>
        <taxon>Enterobacterales</taxon>
        <taxon>Enterobacteriaceae</taxon>
        <taxon>Escherichia</taxon>
    </lineage>
</organism>
<sequence length="85" mass="9246">MAHKKAGGSTRNGRDSEAKRMGVKRFGGESVLAGSIIVRQRGTKFHAGANVGYGRDHTRFAKADGKVKFEVKGPKNRKFISIEAE</sequence>
<feature type="chain" id="PRO_1000017470" description="Large ribosomal subunit protein bL27">
    <location>
        <begin position="1"/>
        <end position="85"/>
    </location>
</feature>
<feature type="region of interest" description="Disordered" evidence="2">
    <location>
        <begin position="1"/>
        <end position="22"/>
    </location>
</feature>
<reference key="1">
    <citation type="journal article" date="2006" name="Mol. Microbiol.">
        <title>Role of pathogenicity island-associated integrases in the genome plasticity of uropathogenic Escherichia coli strain 536.</title>
        <authorList>
            <person name="Hochhut B."/>
            <person name="Wilde C."/>
            <person name="Balling G."/>
            <person name="Middendorf B."/>
            <person name="Dobrindt U."/>
            <person name="Brzuszkiewicz E."/>
            <person name="Gottschalk G."/>
            <person name="Carniel E."/>
            <person name="Hacker J."/>
        </authorList>
    </citation>
    <scope>NUCLEOTIDE SEQUENCE [LARGE SCALE GENOMIC DNA]</scope>
    <source>
        <strain>536 / UPEC</strain>
    </source>
</reference>
<name>RL27_ECOL5</name>
<proteinExistence type="inferred from homology"/>
<evidence type="ECO:0000255" key="1">
    <source>
        <dbReference type="HAMAP-Rule" id="MF_00539"/>
    </source>
</evidence>
<evidence type="ECO:0000256" key="2">
    <source>
        <dbReference type="SAM" id="MobiDB-lite"/>
    </source>
</evidence>
<evidence type="ECO:0000305" key="3"/>
<accession>Q0TCS5</accession>
<keyword id="KW-0687">Ribonucleoprotein</keyword>
<keyword id="KW-0689">Ribosomal protein</keyword>
<dbReference type="EMBL" id="CP000247">
    <property type="protein sequence ID" value="ABG71254.1"/>
    <property type="molecule type" value="Genomic_DNA"/>
</dbReference>
<dbReference type="RefSeq" id="WP_000940597.1">
    <property type="nucleotide sequence ID" value="NC_008253.1"/>
</dbReference>
<dbReference type="SMR" id="Q0TCS5"/>
<dbReference type="KEGG" id="ecp:ECP_3272"/>
<dbReference type="HOGENOM" id="CLU_095424_4_1_6"/>
<dbReference type="Proteomes" id="UP000009182">
    <property type="component" value="Chromosome"/>
</dbReference>
<dbReference type="GO" id="GO:0022625">
    <property type="term" value="C:cytosolic large ribosomal subunit"/>
    <property type="evidence" value="ECO:0007669"/>
    <property type="project" value="TreeGrafter"/>
</dbReference>
<dbReference type="GO" id="GO:0003735">
    <property type="term" value="F:structural constituent of ribosome"/>
    <property type="evidence" value="ECO:0007669"/>
    <property type="project" value="InterPro"/>
</dbReference>
<dbReference type="GO" id="GO:0006412">
    <property type="term" value="P:translation"/>
    <property type="evidence" value="ECO:0007669"/>
    <property type="project" value="UniProtKB-UniRule"/>
</dbReference>
<dbReference type="FunFam" id="2.40.50.100:FF:000001">
    <property type="entry name" value="50S ribosomal protein L27"/>
    <property type="match status" value="1"/>
</dbReference>
<dbReference type="Gene3D" id="2.40.50.100">
    <property type="match status" value="1"/>
</dbReference>
<dbReference type="HAMAP" id="MF_00539">
    <property type="entry name" value="Ribosomal_bL27"/>
    <property type="match status" value="1"/>
</dbReference>
<dbReference type="InterPro" id="IPR001684">
    <property type="entry name" value="Ribosomal_bL27"/>
</dbReference>
<dbReference type="InterPro" id="IPR018261">
    <property type="entry name" value="Ribosomal_bL27_CS"/>
</dbReference>
<dbReference type="NCBIfam" id="TIGR00062">
    <property type="entry name" value="L27"/>
    <property type="match status" value="1"/>
</dbReference>
<dbReference type="PANTHER" id="PTHR15893:SF0">
    <property type="entry name" value="LARGE RIBOSOMAL SUBUNIT PROTEIN BL27M"/>
    <property type="match status" value="1"/>
</dbReference>
<dbReference type="PANTHER" id="PTHR15893">
    <property type="entry name" value="RIBOSOMAL PROTEIN L27"/>
    <property type="match status" value="1"/>
</dbReference>
<dbReference type="Pfam" id="PF01016">
    <property type="entry name" value="Ribosomal_L27"/>
    <property type="match status" value="1"/>
</dbReference>
<dbReference type="PRINTS" id="PR00063">
    <property type="entry name" value="RIBOSOMALL27"/>
</dbReference>
<dbReference type="SUPFAM" id="SSF110324">
    <property type="entry name" value="Ribosomal L27 protein-like"/>
    <property type="match status" value="1"/>
</dbReference>
<dbReference type="PROSITE" id="PS00831">
    <property type="entry name" value="RIBOSOMAL_L27"/>
    <property type="match status" value="1"/>
</dbReference>
<gene>
    <name evidence="1" type="primary">rpmA</name>
    <name type="ordered locus">ECP_3272</name>
</gene>
<comment type="similarity">
    <text evidence="1">Belongs to the bacterial ribosomal protein bL27 family.</text>
</comment>